<keyword id="KW-0106">Calcium</keyword>
<keyword id="KW-0903">Direct protein sequencing</keyword>
<keyword id="KW-1015">Disulfide bond</keyword>
<keyword id="KW-0325">Glycoprotein</keyword>
<keyword id="KW-0349">Heme</keyword>
<keyword id="KW-0376">Hydrogen peroxide</keyword>
<keyword id="KW-0408">Iron</keyword>
<keyword id="KW-0479">Metal-binding</keyword>
<keyword id="KW-0560">Oxidoreductase</keyword>
<keyword id="KW-0575">Peroxidase</keyword>
<keyword id="KW-0873">Pyrrolidone carboxylic acid</keyword>
<keyword id="KW-0964">Secreted</keyword>
<keyword id="KW-0732">Signal</keyword>
<protein>
    <recommendedName>
        <fullName evidence="2">Peroxidase 4</fullName>
        <ecNumber>1.11.1.7</ecNumber>
    </recommendedName>
</protein>
<proteinExistence type="evidence at protein level"/>
<organism>
    <name type="scientific">Vitis vinifera</name>
    <name type="common">Grape</name>
    <dbReference type="NCBI Taxonomy" id="29760"/>
    <lineage>
        <taxon>Eukaryota</taxon>
        <taxon>Viridiplantae</taxon>
        <taxon>Streptophyta</taxon>
        <taxon>Embryophyta</taxon>
        <taxon>Tracheophyta</taxon>
        <taxon>Spermatophyta</taxon>
        <taxon>Magnoliopsida</taxon>
        <taxon>eudicotyledons</taxon>
        <taxon>Gunneridae</taxon>
        <taxon>Pentapetalae</taxon>
        <taxon>rosids</taxon>
        <taxon>Vitales</taxon>
        <taxon>Vitaceae</taxon>
        <taxon>Viteae</taxon>
        <taxon>Vitis</taxon>
    </lineage>
</organism>
<dbReference type="EC" id="1.11.1.7"/>
<dbReference type="RefSeq" id="XP_002269918.1">
    <property type="nucleotide sequence ID" value="XM_002269882.4"/>
</dbReference>
<dbReference type="SMR" id="A7NY33"/>
<dbReference type="PaxDb" id="29760-VIT_06s0004g07770.t01"/>
<dbReference type="EnsemblPlants" id="Vitvi06g00771_t001">
    <property type="protein sequence ID" value="Vitvi06g00771_P001"/>
    <property type="gene ID" value="Vitvi06g00771"/>
</dbReference>
<dbReference type="Gramene" id="Vitvi06g00771_t001">
    <property type="protein sequence ID" value="Vitvi06g00771_P001"/>
    <property type="gene ID" value="Vitvi06g00771"/>
</dbReference>
<dbReference type="eggNOG" id="ENOG502QT8W">
    <property type="taxonomic scope" value="Eukaryota"/>
</dbReference>
<dbReference type="HOGENOM" id="CLU_010543_0_1_1"/>
<dbReference type="OMA" id="GTRRANC"/>
<dbReference type="OrthoDB" id="2113341at2759"/>
<dbReference type="ExpressionAtlas" id="A7NY33">
    <property type="expression patterns" value="baseline and differential"/>
</dbReference>
<dbReference type="GO" id="GO:0005576">
    <property type="term" value="C:extracellular region"/>
    <property type="evidence" value="ECO:0007669"/>
    <property type="project" value="UniProtKB-SubCell"/>
</dbReference>
<dbReference type="GO" id="GO:0020037">
    <property type="term" value="F:heme binding"/>
    <property type="evidence" value="ECO:0007669"/>
    <property type="project" value="InterPro"/>
</dbReference>
<dbReference type="GO" id="GO:0140825">
    <property type="term" value="F:lactoperoxidase activity"/>
    <property type="evidence" value="ECO:0007669"/>
    <property type="project" value="UniProtKB-EC"/>
</dbReference>
<dbReference type="GO" id="GO:0046872">
    <property type="term" value="F:metal ion binding"/>
    <property type="evidence" value="ECO:0007669"/>
    <property type="project" value="UniProtKB-KW"/>
</dbReference>
<dbReference type="GO" id="GO:0042744">
    <property type="term" value="P:hydrogen peroxide catabolic process"/>
    <property type="evidence" value="ECO:0007669"/>
    <property type="project" value="UniProtKB-KW"/>
</dbReference>
<dbReference type="GO" id="GO:0006979">
    <property type="term" value="P:response to oxidative stress"/>
    <property type="evidence" value="ECO:0007669"/>
    <property type="project" value="InterPro"/>
</dbReference>
<dbReference type="CDD" id="cd00693">
    <property type="entry name" value="secretory_peroxidase"/>
    <property type="match status" value="1"/>
</dbReference>
<dbReference type="FunFam" id="1.10.420.10:FF:000006">
    <property type="entry name" value="Peroxidase"/>
    <property type="match status" value="1"/>
</dbReference>
<dbReference type="FunFam" id="1.10.520.10:FF:000001">
    <property type="entry name" value="Peroxidase"/>
    <property type="match status" value="1"/>
</dbReference>
<dbReference type="Gene3D" id="1.10.520.10">
    <property type="match status" value="1"/>
</dbReference>
<dbReference type="Gene3D" id="1.10.420.10">
    <property type="entry name" value="Peroxidase, domain 2"/>
    <property type="match status" value="1"/>
</dbReference>
<dbReference type="InterPro" id="IPR002016">
    <property type="entry name" value="Haem_peroxidase"/>
</dbReference>
<dbReference type="InterPro" id="IPR010255">
    <property type="entry name" value="Haem_peroxidase_sf"/>
</dbReference>
<dbReference type="InterPro" id="IPR000823">
    <property type="entry name" value="Peroxidase_pln"/>
</dbReference>
<dbReference type="InterPro" id="IPR019794">
    <property type="entry name" value="Peroxidases_AS"/>
</dbReference>
<dbReference type="InterPro" id="IPR019793">
    <property type="entry name" value="Peroxidases_heam-ligand_BS"/>
</dbReference>
<dbReference type="InterPro" id="IPR033905">
    <property type="entry name" value="Secretory_peroxidase"/>
</dbReference>
<dbReference type="PANTHER" id="PTHR31388:SF144">
    <property type="entry name" value="PEROXIDASE 67-RELATED"/>
    <property type="match status" value="1"/>
</dbReference>
<dbReference type="PANTHER" id="PTHR31388">
    <property type="entry name" value="PEROXIDASE 72-RELATED"/>
    <property type="match status" value="1"/>
</dbReference>
<dbReference type="Pfam" id="PF00141">
    <property type="entry name" value="peroxidase"/>
    <property type="match status" value="1"/>
</dbReference>
<dbReference type="PRINTS" id="PR00458">
    <property type="entry name" value="PEROXIDASE"/>
</dbReference>
<dbReference type="PRINTS" id="PR00461">
    <property type="entry name" value="PLPEROXIDASE"/>
</dbReference>
<dbReference type="SUPFAM" id="SSF48113">
    <property type="entry name" value="Heme-dependent peroxidases"/>
    <property type="match status" value="1"/>
</dbReference>
<dbReference type="PROSITE" id="PS00435">
    <property type="entry name" value="PEROXIDASE_1"/>
    <property type="match status" value="1"/>
</dbReference>
<dbReference type="PROSITE" id="PS00436">
    <property type="entry name" value="PEROXIDASE_2"/>
    <property type="match status" value="1"/>
</dbReference>
<dbReference type="PROSITE" id="PS50873">
    <property type="entry name" value="PEROXIDASE_4"/>
    <property type="match status" value="1"/>
</dbReference>
<evidence type="ECO:0000250" key="1">
    <source>
        <dbReference type="UniProtKB" id="P84516"/>
    </source>
</evidence>
<evidence type="ECO:0000250" key="2">
    <source>
        <dbReference type="UniProtKB" id="Q42578"/>
    </source>
</evidence>
<evidence type="ECO:0000255" key="3"/>
<evidence type="ECO:0000255" key="4">
    <source>
        <dbReference type="PROSITE-ProRule" id="PRU00297"/>
    </source>
</evidence>
<evidence type="ECO:0000255" key="5">
    <source>
        <dbReference type="PROSITE-ProRule" id="PRU10012"/>
    </source>
</evidence>
<evidence type="ECO:0000269" key="6">
    <source>
    </source>
</evidence>
<evidence type="ECO:0000305" key="7"/>
<gene>
    <name type="ORF">GSVIVT00023967001</name>
    <name type="ORF">LOC100257005</name>
</gene>
<feature type="signal peptide" evidence="3">
    <location>
        <begin position="1"/>
        <end position="25"/>
    </location>
</feature>
<feature type="chain" id="PRO_0000363738" description="Peroxidase 4" evidence="3">
    <location>
        <begin position="26"/>
        <end position="321"/>
    </location>
</feature>
<feature type="active site" description="Proton acceptor" evidence="2 4 5">
    <location>
        <position position="67"/>
    </location>
</feature>
<feature type="binding site" evidence="2 4">
    <location>
        <position position="68"/>
    </location>
    <ligand>
        <name>Ca(2+)</name>
        <dbReference type="ChEBI" id="CHEBI:29108"/>
        <label>1</label>
    </ligand>
</feature>
<feature type="binding site" evidence="2 4">
    <location>
        <position position="71"/>
    </location>
    <ligand>
        <name>Ca(2+)</name>
        <dbReference type="ChEBI" id="CHEBI:29108"/>
        <label>1</label>
    </ligand>
</feature>
<feature type="binding site" evidence="2 4">
    <location>
        <position position="73"/>
    </location>
    <ligand>
        <name>Ca(2+)</name>
        <dbReference type="ChEBI" id="CHEBI:29108"/>
        <label>1</label>
    </ligand>
</feature>
<feature type="binding site" evidence="2 4">
    <location>
        <position position="75"/>
    </location>
    <ligand>
        <name>Ca(2+)</name>
        <dbReference type="ChEBI" id="CHEBI:29108"/>
        <label>1</label>
    </ligand>
</feature>
<feature type="binding site" evidence="2 4">
    <location>
        <position position="77"/>
    </location>
    <ligand>
        <name>Ca(2+)</name>
        <dbReference type="ChEBI" id="CHEBI:29108"/>
        <label>1</label>
    </ligand>
</feature>
<feature type="binding site" evidence="2 4">
    <location>
        <position position="164"/>
    </location>
    <ligand>
        <name>substrate</name>
    </ligand>
</feature>
<feature type="binding site" description="axial binding residue" evidence="2 4">
    <location>
        <position position="194"/>
    </location>
    <ligand>
        <name>heme b</name>
        <dbReference type="ChEBI" id="CHEBI:60344"/>
    </ligand>
    <ligandPart>
        <name>Fe</name>
        <dbReference type="ChEBI" id="CHEBI:18248"/>
    </ligandPart>
</feature>
<feature type="binding site" evidence="2 4">
    <location>
        <position position="195"/>
    </location>
    <ligand>
        <name>Ca(2+)</name>
        <dbReference type="ChEBI" id="CHEBI:29108"/>
        <label>2</label>
    </ligand>
</feature>
<feature type="binding site" evidence="2 4">
    <location>
        <position position="241"/>
    </location>
    <ligand>
        <name>Ca(2+)</name>
        <dbReference type="ChEBI" id="CHEBI:29108"/>
        <label>2</label>
    </ligand>
</feature>
<feature type="binding site" evidence="2 4">
    <location>
        <position position="244"/>
    </location>
    <ligand>
        <name>Ca(2+)</name>
        <dbReference type="ChEBI" id="CHEBI:29108"/>
        <label>2</label>
    </ligand>
</feature>
<feature type="binding site" evidence="2 4">
    <location>
        <position position="249"/>
    </location>
    <ligand>
        <name>Ca(2+)</name>
        <dbReference type="ChEBI" id="CHEBI:29108"/>
        <label>2</label>
    </ligand>
</feature>
<feature type="site" description="Transition state stabilizer" evidence="2 4">
    <location>
        <position position="63"/>
    </location>
</feature>
<feature type="modified residue" description="Pyrrolidone carboxylic acid" evidence="2 4">
    <location>
        <position position="26"/>
    </location>
</feature>
<feature type="glycosylation site" description="N-linked (GlcNAc...) asparagine" evidence="3">
    <location>
        <position position="210"/>
    </location>
</feature>
<feature type="disulfide bond" evidence="2 4">
    <location>
        <begin position="36"/>
        <end position="116"/>
    </location>
</feature>
<feature type="disulfide bond" evidence="2 4">
    <location>
        <begin position="69"/>
        <end position="74"/>
    </location>
</feature>
<feature type="disulfide bond" evidence="2 4">
    <location>
        <begin position="122"/>
        <end position="317"/>
    </location>
</feature>
<feature type="disulfide bond" evidence="2 4">
    <location>
        <begin position="201"/>
        <end position="226"/>
    </location>
</feature>
<feature type="sequence conflict" description="In Ref. 2; AA sequence." evidence="7" ref="2">
    <original>T</original>
    <variation>S</variation>
    <location>
        <position position="304"/>
    </location>
</feature>
<feature type="sequence conflict" description="In Ref. 2; AA sequence." evidence="7" ref="2">
    <original>E</original>
    <variation>K</variation>
    <location>
        <position position="310"/>
    </location>
</feature>
<reference key="1">
    <citation type="journal article" date="2007" name="Nature">
        <title>The grapevine genome sequence suggests ancestral hexaploidization in major angiosperm phyla.</title>
        <authorList>
            <person name="Jaillon O."/>
            <person name="Aury J.-M."/>
            <person name="Noel B."/>
            <person name="Policriti A."/>
            <person name="Clepet C."/>
            <person name="Casagrande A."/>
            <person name="Choisne N."/>
            <person name="Aubourg S."/>
            <person name="Vitulo N."/>
            <person name="Jubin C."/>
            <person name="Vezzi A."/>
            <person name="Legeai F."/>
            <person name="Hugueney P."/>
            <person name="Dasilva C."/>
            <person name="Horner D."/>
            <person name="Mica E."/>
            <person name="Jublot D."/>
            <person name="Poulain J."/>
            <person name="Bruyere C."/>
            <person name="Billault A."/>
            <person name="Segurens B."/>
            <person name="Gouyvenoux M."/>
            <person name="Ugarte E."/>
            <person name="Cattonaro F."/>
            <person name="Anthouard V."/>
            <person name="Vico V."/>
            <person name="Del Fabbro C."/>
            <person name="Alaux M."/>
            <person name="Di Gaspero G."/>
            <person name="Dumas V."/>
            <person name="Felice N."/>
            <person name="Paillard S."/>
            <person name="Juman I."/>
            <person name="Moroldo M."/>
            <person name="Scalabrin S."/>
            <person name="Canaguier A."/>
            <person name="Le Clainche I."/>
            <person name="Malacrida G."/>
            <person name="Durand E."/>
            <person name="Pesole G."/>
            <person name="Laucou V."/>
            <person name="Chatelet P."/>
            <person name="Merdinoglu D."/>
            <person name="Delledonne M."/>
            <person name="Pezzotti M."/>
            <person name="Lecharny A."/>
            <person name="Scarpelli C."/>
            <person name="Artiguenave F."/>
            <person name="Pe M.E."/>
            <person name="Valle G."/>
            <person name="Morgante M."/>
            <person name="Caboche M."/>
            <person name="Adam-Blondon A.-F."/>
            <person name="Weissenbach J."/>
            <person name="Quetier F."/>
            <person name="Wincker P."/>
        </authorList>
    </citation>
    <scope>NUCLEOTIDE SEQUENCE [LARGE SCALE GENOMIC DNA]</scope>
    <source>
        <strain evidence="6">cv. Pinot noir / PN40024</strain>
    </source>
</reference>
<reference evidence="7" key="2">
    <citation type="submission" date="2008-07" db="UniProtKB">
        <authorList>
            <person name="Belchi-Navarro S."/>
            <person name="Almagro L."/>
            <person name="Bru R."/>
            <person name="Pedreno M.A."/>
        </authorList>
    </citation>
    <scope>PROTEIN SEQUENCE OF 56-63; 132-145; 177-200 AND 300-314</scope>
</reference>
<accession>A7NY33</accession>
<name>PER4_VITVI</name>
<comment type="function">
    <text evidence="7">Removal of H(2)O(2), oxidation of toxic reductants, biosynthesis and degradation of lignin, suberization, auxin catabolism, response to environmental stresses such as wounding, pathogen attack and oxidative stress. These functions might be dependent on each isozyme/isoform in each plant tissue.</text>
</comment>
<comment type="catalytic activity">
    <reaction>
        <text>2 a phenolic donor + H2O2 = 2 a phenolic radical donor + 2 H2O</text>
        <dbReference type="Rhea" id="RHEA:56136"/>
        <dbReference type="ChEBI" id="CHEBI:15377"/>
        <dbReference type="ChEBI" id="CHEBI:16240"/>
        <dbReference type="ChEBI" id="CHEBI:139520"/>
        <dbReference type="ChEBI" id="CHEBI:139521"/>
        <dbReference type="EC" id="1.11.1.7"/>
    </reaction>
</comment>
<comment type="cofactor">
    <cofactor evidence="2 4">
        <name>heme b</name>
        <dbReference type="ChEBI" id="CHEBI:60344"/>
    </cofactor>
    <text evidence="2 4">Binds 1 heme b (iron(II)-protoporphyrin IX) group per subunit.</text>
</comment>
<comment type="cofactor">
    <cofactor evidence="2 4">
        <name>Ca(2+)</name>
        <dbReference type="ChEBI" id="CHEBI:29108"/>
    </cofactor>
    <text evidence="2 4">Binds 2 calcium ions per subunit.</text>
</comment>
<comment type="subcellular location">
    <subcellularLocation>
        <location evidence="1 4">Secreted</location>
    </subcellularLocation>
</comment>
<comment type="similarity">
    <text evidence="4">Belongs to the peroxidase family. Classical plant (class III) peroxidase subfamily.</text>
</comment>
<sequence length="321" mass="34060">MASSSFSIVVVALGVLALFAGSSSAQLSTNFYSKTCPKVFDTVKSGVQSAVSKERRMGASLLRLFFHDCFVNGCDASVLLDDTSSFTGEQTAVPNKNSIRGLNVIDNIKSQVESVCPGVVSCADIIAIAARDSVVILGGPDWDVKLGRRDSKTASLSGANNNIPPPTSSLSNLISKFQAQGLSTRDMVALSGAHTIGQARCTSFRARIYNETNIDSSFAKTRQASCPSASGSGDNNLAPLDLQTPTTFDNYYYKNLINQKGLLHSDQVLYNGGSTDSTVKTYVNNPKTFTSDFVAGMIKMGDITPLTGSEGEIRKSCGKVN</sequence>